<organism>
    <name type="scientific">Carboxydothermus hydrogenoformans (strain ATCC BAA-161 / DSM 6008 / Z-2901)</name>
    <dbReference type="NCBI Taxonomy" id="246194"/>
    <lineage>
        <taxon>Bacteria</taxon>
        <taxon>Bacillati</taxon>
        <taxon>Bacillota</taxon>
        <taxon>Clostridia</taxon>
        <taxon>Thermoanaerobacterales</taxon>
        <taxon>Thermoanaerobacteraceae</taxon>
        <taxon>Carboxydothermus</taxon>
    </lineage>
</organism>
<name>TATC_CARHZ</name>
<keyword id="KW-1003">Cell membrane</keyword>
<keyword id="KW-0472">Membrane</keyword>
<keyword id="KW-0653">Protein transport</keyword>
<keyword id="KW-1185">Reference proteome</keyword>
<keyword id="KW-0811">Translocation</keyword>
<keyword id="KW-0812">Transmembrane</keyword>
<keyword id="KW-1133">Transmembrane helix</keyword>
<keyword id="KW-0813">Transport</keyword>
<feature type="chain" id="PRO_0000412860" description="Sec-independent protein translocase protein TatC">
    <location>
        <begin position="1"/>
        <end position="243"/>
    </location>
</feature>
<feature type="transmembrane region" description="Helical" evidence="1">
    <location>
        <begin position="18"/>
        <end position="38"/>
    </location>
</feature>
<feature type="transmembrane region" description="Helical" evidence="1">
    <location>
        <begin position="70"/>
        <end position="90"/>
    </location>
</feature>
<feature type="transmembrane region" description="Helical" evidence="1">
    <location>
        <begin position="106"/>
        <end position="126"/>
    </location>
</feature>
<feature type="transmembrane region" description="Helical" evidence="1">
    <location>
        <begin position="132"/>
        <end position="152"/>
    </location>
</feature>
<feature type="transmembrane region" description="Helical" evidence="1">
    <location>
        <begin position="153"/>
        <end position="173"/>
    </location>
</feature>
<feature type="transmembrane region" description="Helical" evidence="1">
    <location>
        <begin position="191"/>
        <end position="211"/>
    </location>
</feature>
<feature type="transmembrane region" description="Helical" evidence="1">
    <location>
        <begin position="213"/>
        <end position="233"/>
    </location>
</feature>
<proteinExistence type="inferred from homology"/>
<reference key="1">
    <citation type="journal article" date="2005" name="PLoS Genet.">
        <title>Life in hot carbon monoxide: the complete genome sequence of Carboxydothermus hydrogenoformans Z-2901.</title>
        <authorList>
            <person name="Wu M."/>
            <person name="Ren Q."/>
            <person name="Durkin A.S."/>
            <person name="Daugherty S.C."/>
            <person name="Brinkac L.M."/>
            <person name="Dodson R.J."/>
            <person name="Madupu R."/>
            <person name="Sullivan S.A."/>
            <person name="Kolonay J.F."/>
            <person name="Nelson W.C."/>
            <person name="Tallon L.J."/>
            <person name="Jones K.M."/>
            <person name="Ulrich L.E."/>
            <person name="Gonzalez J.M."/>
            <person name="Zhulin I.B."/>
            <person name="Robb F.T."/>
            <person name="Eisen J.A."/>
        </authorList>
    </citation>
    <scope>NUCLEOTIDE SEQUENCE [LARGE SCALE GENOMIC DNA]</scope>
    <source>
        <strain>ATCC BAA-161 / DSM 6008 / Z-2901</strain>
    </source>
</reference>
<evidence type="ECO:0000255" key="1">
    <source>
        <dbReference type="HAMAP-Rule" id="MF_00902"/>
    </source>
</evidence>
<comment type="function">
    <text evidence="1">Part of the twin-arginine translocation (Tat) system that transports large folded proteins containing a characteristic twin-arginine motif in their signal peptide across membranes.</text>
</comment>
<comment type="subunit">
    <text evidence="1">Forms a complex with TatA.</text>
</comment>
<comment type="subcellular location">
    <subcellularLocation>
        <location evidence="1">Cell membrane</location>
        <topology evidence="1">Multi-pass membrane protein</topology>
    </subcellularLocation>
</comment>
<comment type="similarity">
    <text evidence="1">Belongs to the TatC family.</text>
</comment>
<protein>
    <recommendedName>
        <fullName evidence="1">Sec-independent protein translocase protein TatC</fullName>
    </recommendedName>
</protein>
<dbReference type="EMBL" id="CP000141">
    <property type="protein sequence ID" value="ABB14493.1"/>
    <property type="molecule type" value="Genomic_DNA"/>
</dbReference>
<dbReference type="RefSeq" id="WP_011343790.1">
    <property type="nucleotide sequence ID" value="NC_007503.1"/>
</dbReference>
<dbReference type="SMR" id="Q3ADS0"/>
<dbReference type="FunCoup" id="Q3ADS0">
    <property type="interactions" value="429"/>
</dbReference>
<dbReference type="STRING" id="246194.CHY_0863"/>
<dbReference type="KEGG" id="chy:CHY_0863"/>
<dbReference type="eggNOG" id="COG0805">
    <property type="taxonomic scope" value="Bacteria"/>
</dbReference>
<dbReference type="HOGENOM" id="CLU_031942_3_3_9"/>
<dbReference type="InParanoid" id="Q3ADS0"/>
<dbReference type="OrthoDB" id="9777044at2"/>
<dbReference type="Proteomes" id="UP000002706">
    <property type="component" value="Chromosome"/>
</dbReference>
<dbReference type="GO" id="GO:0033281">
    <property type="term" value="C:TAT protein transport complex"/>
    <property type="evidence" value="ECO:0007669"/>
    <property type="project" value="UniProtKB-UniRule"/>
</dbReference>
<dbReference type="GO" id="GO:0009977">
    <property type="term" value="F:proton motive force dependent protein transmembrane transporter activity"/>
    <property type="evidence" value="ECO:0007669"/>
    <property type="project" value="TreeGrafter"/>
</dbReference>
<dbReference type="GO" id="GO:0065002">
    <property type="term" value="P:intracellular protein transmembrane transport"/>
    <property type="evidence" value="ECO:0007669"/>
    <property type="project" value="TreeGrafter"/>
</dbReference>
<dbReference type="GO" id="GO:0043953">
    <property type="term" value="P:protein transport by the Tat complex"/>
    <property type="evidence" value="ECO:0007669"/>
    <property type="project" value="UniProtKB-UniRule"/>
</dbReference>
<dbReference type="HAMAP" id="MF_00902">
    <property type="entry name" value="TatC"/>
    <property type="match status" value="1"/>
</dbReference>
<dbReference type="InterPro" id="IPR002033">
    <property type="entry name" value="TatC"/>
</dbReference>
<dbReference type="NCBIfam" id="TIGR00945">
    <property type="entry name" value="tatC"/>
    <property type="match status" value="1"/>
</dbReference>
<dbReference type="PANTHER" id="PTHR30371">
    <property type="entry name" value="SEC-INDEPENDENT PROTEIN TRANSLOCASE PROTEIN TATC"/>
    <property type="match status" value="1"/>
</dbReference>
<dbReference type="PANTHER" id="PTHR30371:SF0">
    <property type="entry name" value="SEC-INDEPENDENT PROTEIN TRANSLOCASE PROTEIN TATC, CHLOROPLASTIC-RELATED"/>
    <property type="match status" value="1"/>
</dbReference>
<dbReference type="Pfam" id="PF00902">
    <property type="entry name" value="TatC"/>
    <property type="match status" value="1"/>
</dbReference>
<dbReference type="PRINTS" id="PR01840">
    <property type="entry name" value="TATCFAMILY"/>
</dbReference>
<gene>
    <name evidence="1" type="primary">tatC</name>
    <name type="ordered locus">CHY_0863</name>
</gene>
<sequence length="243" mass="27394">MEDKPMTLFEHLEALRKVIIISVIAIVIGSIIAYNYVDYFLNILLQPVTALKMKLVFINVTEAFMTKLKIAIILGIILASPIILWQIWSFVAPGLKPAERKFILRMIPVIIILFVAGIVFAFFTVFQIATRFLLQFGGDIMSPMITIGKYISFALNFLIPFGLVFELPVVVYILAKLNIISHEFLVKNRKYALLVVFILAAALTPGPDVISQLLMAAPLLILYEVSIFIAKFIKPKEFSGERK</sequence>
<accession>Q3ADS0</accession>